<gene>
    <name type="primary">CTR1</name>
    <name type="ordered locus">CAALFM_C600790CA</name>
    <name type="ORF">CaO19.11130</name>
    <name type="ORF">CaO19.3646</name>
</gene>
<keyword id="KW-1003">Cell membrane</keyword>
<keyword id="KW-0186">Copper</keyword>
<keyword id="KW-0187">Copper transport</keyword>
<keyword id="KW-0406">Ion transport</keyword>
<keyword id="KW-0472">Membrane</keyword>
<keyword id="KW-1185">Reference proteome</keyword>
<keyword id="KW-0812">Transmembrane</keyword>
<keyword id="KW-1133">Transmembrane helix</keyword>
<keyword id="KW-0813">Transport</keyword>
<dbReference type="EMBL" id="CP017628">
    <property type="protein sequence ID" value="AOW30025.1"/>
    <property type="molecule type" value="Genomic_DNA"/>
</dbReference>
<dbReference type="RefSeq" id="XP_711319.1">
    <property type="nucleotide sequence ID" value="XM_706227.1"/>
</dbReference>
<dbReference type="SMR" id="Q59NP1"/>
<dbReference type="STRING" id="237561.Q59NP1"/>
<dbReference type="EnsemblFungi" id="C6_00790C_A-T">
    <property type="protein sequence ID" value="C6_00790C_A-T-p1"/>
    <property type="gene ID" value="C6_00790C_A"/>
</dbReference>
<dbReference type="GeneID" id="3647077"/>
<dbReference type="KEGG" id="cal:CAALFM_C600790CA"/>
<dbReference type="CGD" id="CAL0000196962">
    <property type="gene designation" value="CTR1"/>
</dbReference>
<dbReference type="VEuPathDB" id="FungiDB:C6_00790C_A"/>
<dbReference type="HOGENOM" id="CLU_093528_0_0_1"/>
<dbReference type="InParanoid" id="Q59NP1"/>
<dbReference type="OMA" id="YLEEVVW"/>
<dbReference type="OrthoDB" id="73901at2759"/>
<dbReference type="PHI-base" id="PHI:6485"/>
<dbReference type="PRO" id="PR:Q59NP1"/>
<dbReference type="Proteomes" id="UP000000559">
    <property type="component" value="Chromosome 6"/>
</dbReference>
<dbReference type="GO" id="GO:0005886">
    <property type="term" value="C:plasma membrane"/>
    <property type="evidence" value="ECO:0000314"/>
    <property type="project" value="CGD"/>
</dbReference>
<dbReference type="GO" id="GO:0005375">
    <property type="term" value="F:copper ion transmembrane transporter activity"/>
    <property type="evidence" value="ECO:0000316"/>
    <property type="project" value="CGD"/>
</dbReference>
<dbReference type="GO" id="GO:0015677">
    <property type="term" value="P:copper ion import"/>
    <property type="evidence" value="ECO:0000315"/>
    <property type="project" value="CGD"/>
</dbReference>
<dbReference type="GO" id="GO:0006825">
    <property type="term" value="P:copper ion transport"/>
    <property type="evidence" value="ECO:0000316"/>
    <property type="project" value="CGD"/>
</dbReference>
<dbReference type="GO" id="GO:0034755">
    <property type="term" value="P:iron ion transmembrane transport"/>
    <property type="evidence" value="ECO:0000315"/>
    <property type="project" value="CGD"/>
</dbReference>
<dbReference type="InterPro" id="IPR007274">
    <property type="entry name" value="Cop_transporter"/>
</dbReference>
<dbReference type="PANTHER" id="PTHR12483:SF27">
    <property type="entry name" value="COPPER TRANSPORT PROTEIN CTR1"/>
    <property type="match status" value="1"/>
</dbReference>
<dbReference type="PANTHER" id="PTHR12483">
    <property type="entry name" value="SOLUTE CARRIER FAMILY 31 COPPER TRANSPORTERS"/>
    <property type="match status" value="1"/>
</dbReference>
<dbReference type="Pfam" id="PF04145">
    <property type="entry name" value="Ctr"/>
    <property type="match status" value="1"/>
</dbReference>
<feature type="chain" id="PRO_0000422812" description="Copper transport protein CTR1">
    <location>
        <begin position="1"/>
        <end position="251"/>
    </location>
</feature>
<feature type="transmembrane region" description="Helical" evidence="2">
    <location>
        <begin position="90"/>
        <end position="110"/>
    </location>
</feature>
<feature type="transmembrane region" description="Helical" evidence="2">
    <location>
        <begin position="208"/>
        <end position="228"/>
    </location>
</feature>
<feature type="region of interest" description="Disordered" evidence="3">
    <location>
        <begin position="157"/>
        <end position="176"/>
    </location>
</feature>
<feature type="compositionally biased region" description="Basic and acidic residues" evidence="3">
    <location>
        <begin position="157"/>
        <end position="173"/>
    </location>
</feature>
<protein>
    <recommendedName>
        <fullName>Copper transport protein CTR1</fullName>
    </recommendedName>
</protein>
<proteinExistence type="evidence at protein level"/>
<organism>
    <name type="scientific">Candida albicans (strain SC5314 / ATCC MYA-2876)</name>
    <name type="common">Yeast</name>
    <dbReference type="NCBI Taxonomy" id="237561"/>
    <lineage>
        <taxon>Eukaryota</taxon>
        <taxon>Fungi</taxon>
        <taxon>Dikarya</taxon>
        <taxon>Ascomycota</taxon>
        <taxon>Saccharomycotina</taxon>
        <taxon>Pichiomycetes</taxon>
        <taxon>Debaryomycetaceae</taxon>
        <taxon>Candida/Lodderomyces clade</taxon>
        <taxon>Candida</taxon>
    </lineage>
</organism>
<accession>Q59NP1</accession>
<accession>A0A1D8PPG9</accession>
<comment type="function">
    <text evidence="6 7 14">Required for high affinity copper (probably reduced Cu I) transport into the cell.</text>
</comment>
<comment type="subunit">
    <text evidence="1">Oligomer.</text>
</comment>
<comment type="subcellular location">
    <subcellularLocation>
        <location evidence="12">Cell membrane</location>
        <topology evidence="12">Multi-pass membrane protein</topology>
    </subcellularLocation>
</comment>
<comment type="induction">
    <text evidence="4 5 6 7 8 9 10 11 13 14">Expressed in limited copper conditions. Expression is positively controlled by MAC1 and TYE7. Induced during biofilm formation and contact with macrophages as well as by alkaline pH via RIM101. Expression is down-regulated by 17-beta-estradiol.</text>
</comment>
<comment type="disruption phenotype">
    <text evidence="6">Impairs growth on solid low-copper and low-iron medium and displays altered morphology in response to copper-depleted conditions.</text>
</comment>
<evidence type="ECO:0000250" key="1"/>
<evidence type="ECO:0000255" key="2"/>
<evidence type="ECO:0000256" key="3">
    <source>
        <dbReference type="SAM" id="MobiDB-lite"/>
    </source>
</evidence>
<evidence type="ECO:0000269" key="4">
    <source>
    </source>
</evidence>
<evidence type="ECO:0000269" key="5">
    <source>
    </source>
</evidence>
<evidence type="ECO:0000269" key="6">
    <source>
    </source>
</evidence>
<evidence type="ECO:0000269" key="7">
    <source>
    </source>
</evidence>
<evidence type="ECO:0000269" key="8">
    <source>
    </source>
</evidence>
<evidence type="ECO:0000269" key="9">
    <source>
    </source>
</evidence>
<evidence type="ECO:0000269" key="10">
    <source>
    </source>
</evidence>
<evidence type="ECO:0000269" key="11">
    <source>
    </source>
</evidence>
<evidence type="ECO:0000269" key="12">
    <source>
    </source>
</evidence>
<evidence type="ECO:0000269" key="13">
    <source>
    </source>
</evidence>
<evidence type="ECO:0000269" key="14">
    <source>
    </source>
</evidence>
<sequence>MEFLKRHEGHMHMSDSATSMVTSATSAVMDMASATMSMTMSSSTSSSSGMAMEGMDHGSSHMAMNMWLTASFKDYPVVFKDLRASTKAQAFGIFVLLFFVAFLARMLEFVRNYLEEIVWKNNNYAEVEQGISQHSANLQSPPVKSCCDDNAKEVVSDESIDKQNSPQHEETTKARGTGKSLSLASTISRDIIRLALCIIPDLFAYSLMLAAMTYTLTYFFAVVIGSGVGRFVAERLMEHYRIKRGPPRNCC</sequence>
<reference key="1">
    <citation type="journal article" date="2004" name="Proc. Natl. Acad. Sci. U.S.A.">
        <title>The diploid genome sequence of Candida albicans.</title>
        <authorList>
            <person name="Jones T."/>
            <person name="Federspiel N.A."/>
            <person name="Chibana H."/>
            <person name="Dungan J."/>
            <person name="Kalman S."/>
            <person name="Magee B.B."/>
            <person name="Newport G."/>
            <person name="Thorstenson Y.R."/>
            <person name="Agabian N."/>
            <person name="Magee P.T."/>
            <person name="Davis R.W."/>
            <person name="Scherer S."/>
        </authorList>
    </citation>
    <scope>NUCLEOTIDE SEQUENCE [LARGE SCALE GENOMIC DNA]</scope>
    <source>
        <strain>SC5314 / ATCC MYA-2876</strain>
    </source>
</reference>
<reference key="2">
    <citation type="journal article" date="2007" name="Genome Biol.">
        <title>Assembly of the Candida albicans genome into sixteen supercontigs aligned on the eight chromosomes.</title>
        <authorList>
            <person name="van het Hoog M."/>
            <person name="Rast T.J."/>
            <person name="Martchenko M."/>
            <person name="Grindle S."/>
            <person name="Dignard D."/>
            <person name="Hogues H."/>
            <person name="Cuomo C."/>
            <person name="Berriman M."/>
            <person name="Scherer S."/>
            <person name="Magee B.B."/>
            <person name="Whiteway M."/>
            <person name="Chibana H."/>
            <person name="Nantel A."/>
            <person name="Magee P.T."/>
        </authorList>
    </citation>
    <scope>GENOME REANNOTATION</scope>
    <source>
        <strain>SC5314 / ATCC MYA-2876</strain>
    </source>
</reference>
<reference key="3">
    <citation type="journal article" date="2013" name="Genome Biol.">
        <title>Assembly of a phased diploid Candida albicans genome facilitates allele-specific measurements and provides a simple model for repeat and indel structure.</title>
        <authorList>
            <person name="Muzzey D."/>
            <person name="Schwartz K."/>
            <person name="Weissman J.S."/>
            <person name="Sherlock G."/>
        </authorList>
    </citation>
    <scope>NUCLEOTIDE SEQUENCE [LARGE SCALE GENOMIC DNA]</scope>
    <scope>GENOME REANNOTATION</scope>
    <source>
        <strain>SC5314 / ATCC MYA-2876</strain>
    </source>
</reference>
<reference key="4">
    <citation type="journal article" date="2001" name="J. Biol. Chem.">
        <title>DNA array studies demonstrate convergent regulation of virulence factors by Cph1, Cph2, and Efg1 in Candida albicans.</title>
        <authorList>
            <person name="Lane S."/>
            <person name="Birse C."/>
            <person name="Zhou S."/>
            <person name="Matson R."/>
            <person name="Liu H."/>
        </authorList>
    </citation>
    <scope>INDUCTION</scope>
</reference>
<reference key="5">
    <citation type="journal article" date="2002" name="Mol. Biol. Cell">
        <title>Transcription profiling of Candida albicans cells undergoing the yeast-to-hyphal transition.</title>
        <authorList>
            <person name="Nantel A."/>
            <person name="Dignard D."/>
            <person name="Bachewich C."/>
            <person name="Harcus D."/>
            <person name="Marcil A."/>
            <person name="Bouin A.P."/>
            <person name="Sensen C.W."/>
            <person name="Hogues H."/>
            <person name="van het Hoog M."/>
            <person name="Gordon P."/>
            <person name="Rigby T."/>
            <person name="Benoit F."/>
            <person name="Tessier D.C."/>
            <person name="Thomas D.Y."/>
            <person name="Whiteway M."/>
        </authorList>
    </citation>
    <scope>INDUCTION</scope>
</reference>
<reference key="6">
    <citation type="journal article" date="2003" name="Microbiology">
        <title>The Candida albicans CTR1 gene encodes a functional copper transporter.</title>
        <authorList>
            <person name="Marvin M.E."/>
            <person name="Williams P.H."/>
            <person name="Cashmore A.M."/>
        </authorList>
    </citation>
    <scope>FUNCTION</scope>
    <scope>INDUCTION</scope>
    <scope>DISRUPTION PHENOTYPE</scope>
</reference>
<reference key="7">
    <citation type="journal article" date="2004" name="Eukaryot. Cell">
        <title>Transcriptional response of Candida albicans upon internalization by macrophages.</title>
        <authorList>
            <person name="Lorenz M.C."/>
            <person name="Bender J.A."/>
            <person name="Fink G.R."/>
        </authorList>
    </citation>
    <scope>INDUCTION</scope>
</reference>
<reference key="8">
    <citation type="journal article" date="2004" name="Microbiology">
        <title>The CaCTR1 gene is required for high-affinity iron uptake and is transcriptionally controlled by a copper-sensing transactivator encoded by CaMAC1.</title>
        <authorList>
            <person name="Marvin M.E."/>
            <person name="Mason R.P."/>
            <person name="Cashmore A.M."/>
        </authorList>
    </citation>
    <scope>FUNCTION</scope>
    <scope>INDUCTION</scope>
</reference>
<reference key="9">
    <citation type="journal article" date="2004" name="Mol. Microbiol.">
        <title>Transcriptional profiling in Candida albicans reveals new adaptive responses to extracellular pH and functions for Rim101p.</title>
        <authorList>
            <person name="Bensen E.S."/>
            <person name="Martin S.J."/>
            <person name="Li M."/>
            <person name="Berman J."/>
            <person name="Davis D.A."/>
        </authorList>
    </citation>
    <scope>INDUCTION</scope>
</reference>
<reference key="10">
    <citation type="journal article" date="2005" name="Biochem. Biophys. Res. Commun.">
        <title>Global analysis of altered gene expression during morphogenesis of Candida albicans in vitro.</title>
        <authorList>
            <person name="Singh V."/>
            <person name="Sinha I."/>
            <person name="Sadhale P.P."/>
        </authorList>
    </citation>
    <scope>INDUCTION</scope>
</reference>
<reference key="11">
    <citation type="journal article" date="2006" name="Eukaryot. Cell">
        <title>Cellular and molecular biology of Candida albicans estrogen response.</title>
        <authorList>
            <person name="Cheng G."/>
            <person name="Yeater K.M."/>
            <person name="Hoyer L.L."/>
        </authorList>
    </citation>
    <scope>INDUCTION</scope>
</reference>
<reference key="12">
    <citation type="journal article" date="2009" name="Proteomics">
        <title>Analysis of Candida albicans plasma membrane proteome.</title>
        <authorList>
            <person name="Cabezon V."/>
            <person name="Llama-Palacios A."/>
            <person name="Nombela C."/>
            <person name="Monteoliva L."/>
            <person name="Gil C."/>
        </authorList>
    </citation>
    <scope>IDENTIFICATION BY MASS SPECTROMETRY</scope>
    <scope>SUBCELLULAR LOCATION</scope>
</reference>
<reference key="13">
    <citation type="journal article" date="2011" name="Mol. Microbiol.">
        <title>Contribution of the glycolytic flux and hypoxia adaptation to efficient biofilm formation by Candida albicans.</title>
        <authorList>
            <person name="Bonhomme J."/>
            <person name="Chauvel M."/>
            <person name="Goyard S."/>
            <person name="Roux P."/>
            <person name="Rossignol T."/>
            <person name="d'Enfert C."/>
        </authorList>
    </citation>
    <scope>INDUCTION</scope>
</reference>
<reference key="14">
    <citation type="journal article" date="2013" name="Eukaryot. Cell">
        <title>Regulation of copper toxicity by Candida albicans GPA2.</title>
        <authorList>
            <person name="Schwartz J.A."/>
            <person name="Olarte K.T."/>
            <person name="Michalek J.L."/>
            <person name="Jandu G.S."/>
            <person name="Michel S.L."/>
            <person name="Bruno V.M."/>
        </authorList>
    </citation>
    <scope>FUNCTION</scope>
    <scope>INDUCTION</scope>
</reference>
<name>CTR1_CANAL</name>